<dbReference type="EC" id="2.8.4.4" evidence="1"/>
<dbReference type="EMBL" id="CP000946">
    <property type="protein sequence ID" value="ACA78435.1"/>
    <property type="molecule type" value="Genomic_DNA"/>
</dbReference>
<dbReference type="RefSeq" id="WP_000049367.1">
    <property type="nucleotide sequence ID" value="NZ_MTFT01000003.1"/>
</dbReference>
<dbReference type="SMR" id="B1IXD2"/>
<dbReference type="GeneID" id="75204700"/>
<dbReference type="KEGG" id="ecl:EcolC_2807"/>
<dbReference type="HOGENOM" id="CLU_018697_0_0_6"/>
<dbReference type="GO" id="GO:0005829">
    <property type="term" value="C:cytosol"/>
    <property type="evidence" value="ECO:0007669"/>
    <property type="project" value="TreeGrafter"/>
</dbReference>
<dbReference type="GO" id="GO:0051539">
    <property type="term" value="F:4 iron, 4 sulfur cluster binding"/>
    <property type="evidence" value="ECO:0007669"/>
    <property type="project" value="UniProtKB-UniRule"/>
</dbReference>
<dbReference type="GO" id="GO:0035599">
    <property type="term" value="F:aspartic acid methylthiotransferase activity"/>
    <property type="evidence" value="ECO:0007669"/>
    <property type="project" value="TreeGrafter"/>
</dbReference>
<dbReference type="GO" id="GO:0046872">
    <property type="term" value="F:metal ion binding"/>
    <property type="evidence" value="ECO:0007669"/>
    <property type="project" value="UniProtKB-KW"/>
</dbReference>
<dbReference type="GO" id="GO:0103039">
    <property type="term" value="F:protein methylthiotransferase activity"/>
    <property type="evidence" value="ECO:0007669"/>
    <property type="project" value="UniProtKB-EC"/>
</dbReference>
<dbReference type="GO" id="GO:0006400">
    <property type="term" value="P:tRNA modification"/>
    <property type="evidence" value="ECO:0007669"/>
    <property type="project" value="InterPro"/>
</dbReference>
<dbReference type="CDD" id="cd01335">
    <property type="entry name" value="Radical_SAM"/>
    <property type="match status" value="1"/>
</dbReference>
<dbReference type="FunFam" id="2.40.50.140:FF:000060">
    <property type="entry name" value="Ribosomal protein S12 methylthiotransferase RimO"/>
    <property type="match status" value="1"/>
</dbReference>
<dbReference type="FunFam" id="3.40.50.12160:FF:000002">
    <property type="entry name" value="Ribosomal protein S12 methylthiotransferase RimO"/>
    <property type="match status" value="1"/>
</dbReference>
<dbReference type="FunFam" id="3.80.30.20:FF:000001">
    <property type="entry name" value="tRNA-2-methylthio-N(6)-dimethylallyladenosine synthase 2"/>
    <property type="match status" value="1"/>
</dbReference>
<dbReference type="Gene3D" id="3.40.50.12160">
    <property type="entry name" value="Methylthiotransferase, N-terminal domain"/>
    <property type="match status" value="1"/>
</dbReference>
<dbReference type="Gene3D" id="2.40.50.140">
    <property type="entry name" value="Nucleic acid-binding proteins"/>
    <property type="match status" value="1"/>
</dbReference>
<dbReference type="Gene3D" id="3.80.30.20">
    <property type="entry name" value="tm_1862 like domain"/>
    <property type="match status" value="1"/>
</dbReference>
<dbReference type="HAMAP" id="MF_01865">
    <property type="entry name" value="MTTase_RimO"/>
    <property type="match status" value="1"/>
</dbReference>
<dbReference type="InterPro" id="IPR006638">
    <property type="entry name" value="Elp3/MiaA/NifB-like_rSAM"/>
</dbReference>
<dbReference type="InterPro" id="IPR005839">
    <property type="entry name" value="Methylthiotransferase"/>
</dbReference>
<dbReference type="InterPro" id="IPR020612">
    <property type="entry name" value="Methylthiotransferase_CS"/>
</dbReference>
<dbReference type="InterPro" id="IPR013848">
    <property type="entry name" value="Methylthiotransferase_N"/>
</dbReference>
<dbReference type="InterPro" id="IPR038135">
    <property type="entry name" value="Methylthiotransferase_N_sf"/>
</dbReference>
<dbReference type="InterPro" id="IPR012340">
    <property type="entry name" value="NA-bd_OB-fold"/>
</dbReference>
<dbReference type="InterPro" id="IPR005840">
    <property type="entry name" value="Ribosomal_uS12_MeSTrfase_RimO"/>
</dbReference>
<dbReference type="InterPro" id="IPR007197">
    <property type="entry name" value="rSAM"/>
</dbReference>
<dbReference type="InterPro" id="IPR023404">
    <property type="entry name" value="rSAM_horseshoe"/>
</dbReference>
<dbReference type="InterPro" id="IPR002792">
    <property type="entry name" value="TRAM_dom"/>
</dbReference>
<dbReference type="NCBIfam" id="TIGR01125">
    <property type="entry name" value="30S ribosomal protein S12 methylthiotransferase RimO"/>
    <property type="match status" value="1"/>
</dbReference>
<dbReference type="NCBIfam" id="TIGR00089">
    <property type="entry name" value="MiaB/RimO family radical SAM methylthiotransferase"/>
    <property type="match status" value="1"/>
</dbReference>
<dbReference type="PANTHER" id="PTHR43837">
    <property type="entry name" value="RIBOSOMAL PROTEIN S12 METHYLTHIOTRANSFERASE RIMO"/>
    <property type="match status" value="1"/>
</dbReference>
<dbReference type="PANTHER" id="PTHR43837:SF1">
    <property type="entry name" value="RIBOSOMAL PROTEIN US12 METHYLTHIOTRANSFERASE RIMO"/>
    <property type="match status" value="1"/>
</dbReference>
<dbReference type="Pfam" id="PF04055">
    <property type="entry name" value="Radical_SAM"/>
    <property type="match status" value="1"/>
</dbReference>
<dbReference type="Pfam" id="PF18693">
    <property type="entry name" value="TRAM_2"/>
    <property type="match status" value="1"/>
</dbReference>
<dbReference type="Pfam" id="PF00919">
    <property type="entry name" value="UPF0004"/>
    <property type="match status" value="1"/>
</dbReference>
<dbReference type="SFLD" id="SFLDG01082">
    <property type="entry name" value="B12-binding_domain_containing"/>
    <property type="match status" value="1"/>
</dbReference>
<dbReference type="SFLD" id="SFLDS00029">
    <property type="entry name" value="Radical_SAM"/>
    <property type="match status" value="1"/>
</dbReference>
<dbReference type="SFLD" id="SFLDF00274">
    <property type="entry name" value="ribosomal_protein_S12_methylth"/>
    <property type="match status" value="1"/>
</dbReference>
<dbReference type="SMART" id="SM00729">
    <property type="entry name" value="Elp3"/>
    <property type="match status" value="1"/>
</dbReference>
<dbReference type="SUPFAM" id="SSF102114">
    <property type="entry name" value="Radical SAM enzymes"/>
    <property type="match status" value="1"/>
</dbReference>
<dbReference type="PROSITE" id="PS51449">
    <property type="entry name" value="MTTASE_N"/>
    <property type="match status" value="1"/>
</dbReference>
<dbReference type="PROSITE" id="PS01278">
    <property type="entry name" value="MTTASE_RADICAL"/>
    <property type="match status" value="1"/>
</dbReference>
<dbReference type="PROSITE" id="PS51918">
    <property type="entry name" value="RADICAL_SAM"/>
    <property type="match status" value="1"/>
</dbReference>
<dbReference type="PROSITE" id="PS50926">
    <property type="entry name" value="TRAM"/>
    <property type="match status" value="1"/>
</dbReference>
<feature type="chain" id="PRO_0000374817" description="Ribosomal protein uS12 methylthiotransferase RimO">
    <location>
        <begin position="1"/>
        <end position="441"/>
    </location>
</feature>
<feature type="domain" description="MTTase N-terminal" evidence="1">
    <location>
        <begin position="8"/>
        <end position="118"/>
    </location>
</feature>
<feature type="domain" description="Radical SAM core" evidence="2">
    <location>
        <begin position="136"/>
        <end position="373"/>
    </location>
</feature>
<feature type="domain" description="TRAM" evidence="1">
    <location>
        <begin position="376"/>
        <end position="441"/>
    </location>
</feature>
<feature type="binding site" evidence="1">
    <location>
        <position position="17"/>
    </location>
    <ligand>
        <name>[4Fe-4S] cluster</name>
        <dbReference type="ChEBI" id="CHEBI:49883"/>
        <label>1</label>
    </ligand>
</feature>
<feature type="binding site" evidence="1">
    <location>
        <position position="53"/>
    </location>
    <ligand>
        <name>[4Fe-4S] cluster</name>
        <dbReference type="ChEBI" id="CHEBI:49883"/>
        <label>1</label>
    </ligand>
</feature>
<feature type="binding site" evidence="1">
    <location>
        <position position="82"/>
    </location>
    <ligand>
        <name>[4Fe-4S] cluster</name>
        <dbReference type="ChEBI" id="CHEBI:49883"/>
        <label>1</label>
    </ligand>
</feature>
<feature type="binding site" evidence="1">
    <location>
        <position position="150"/>
    </location>
    <ligand>
        <name>[4Fe-4S] cluster</name>
        <dbReference type="ChEBI" id="CHEBI:49883"/>
        <label>2</label>
        <note>4Fe-4S-S-AdoMet</note>
    </ligand>
</feature>
<feature type="binding site" evidence="1">
    <location>
        <position position="154"/>
    </location>
    <ligand>
        <name>[4Fe-4S] cluster</name>
        <dbReference type="ChEBI" id="CHEBI:49883"/>
        <label>2</label>
        <note>4Fe-4S-S-AdoMet</note>
    </ligand>
</feature>
<feature type="binding site" evidence="1">
    <location>
        <position position="157"/>
    </location>
    <ligand>
        <name>[4Fe-4S] cluster</name>
        <dbReference type="ChEBI" id="CHEBI:49883"/>
        <label>2</label>
        <note>4Fe-4S-S-AdoMet</note>
    </ligand>
</feature>
<evidence type="ECO:0000255" key="1">
    <source>
        <dbReference type="HAMAP-Rule" id="MF_01865"/>
    </source>
</evidence>
<evidence type="ECO:0000255" key="2">
    <source>
        <dbReference type="PROSITE-ProRule" id="PRU01266"/>
    </source>
</evidence>
<proteinExistence type="inferred from homology"/>
<sequence>MSKVTPQPKIGFVSLGCPKNLVDSERILTELRTEGYDVVPSYDDADMVIVNTCGFIDSAVQESLEAIGEALNENGKVIVTGCLGAKEDQIREVHPKVLEITGPHSYEQVLEHVHHYVPKPKHNPFLSLVPEQGVKLTPRHYAYLKISEGCNHRCTFCIIPSMRGDLVSRPIGEVLSEAKRLVDAGVKEILVISQDTSAYGVDVKHRTGFHNGEPVKTSMVSLCEQLSKLGIWTRLHYVYPYPHVDDVIPLMAEGKILPYLDIPLQHASPRILKLMKRPGSVDRQLARIKQWREICPELTLRSTFIVGFPGETEEDFQMLLDFLKEARLDRVGCFKYSPVEGADANALPDQVPEEVKEERWNRFMQLQQQISAERLQEKVGREILVIIDEVDEEGAIGRSMADAPEIDGAVYLNGETNVKPGDILRVKVEHADEYDLWGSRV</sequence>
<protein>
    <recommendedName>
        <fullName evidence="1">Ribosomal protein uS12 methylthiotransferase RimO</fullName>
        <shortName evidence="1">uS12 MTTase</shortName>
        <shortName evidence="1">uS12 methylthiotransferase</shortName>
        <ecNumber evidence="1">2.8.4.4</ecNumber>
    </recommendedName>
    <alternativeName>
        <fullName evidence="1">Ribosomal protein uS12 (aspartate-C(3))-methylthiotransferase</fullName>
    </alternativeName>
    <alternativeName>
        <fullName evidence="1">Ribosome maturation factor RimO</fullName>
    </alternativeName>
</protein>
<organism>
    <name type="scientific">Escherichia coli (strain ATCC 8739 / DSM 1576 / NBRC 3972 / NCIMB 8545 / WDCM 00012 / Crooks)</name>
    <dbReference type="NCBI Taxonomy" id="481805"/>
    <lineage>
        <taxon>Bacteria</taxon>
        <taxon>Pseudomonadati</taxon>
        <taxon>Pseudomonadota</taxon>
        <taxon>Gammaproteobacteria</taxon>
        <taxon>Enterobacterales</taxon>
        <taxon>Enterobacteriaceae</taxon>
        <taxon>Escherichia</taxon>
    </lineage>
</organism>
<gene>
    <name evidence="1" type="primary">rimO</name>
    <name type="ordered locus">EcolC_2807</name>
</gene>
<comment type="function">
    <text evidence="1">Catalyzes the methylthiolation of an aspartic acid residue of ribosomal protein uS12.</text>
</comment>
<comment type="catalytic activity">
    <reaction evidence="1">
        <text>L-aspartate(89)-[ribosomal protein uS12]-hydrogen + (sulfur carrier)-SH + AH2 + 2 S-adenosyl-L-methionine = 3-methylsulfanyl-L-aspartate(89)-[ribosomal protein uS12]-hydrogen + (sulfur carrier)-H + 5'-deoxyadenosine + L-methionine + A + S-adenosyl-L-homocysteine + 2 H(+)</text>
        <dbReference type="Rhea" id="RHEA:37087"/>
        <dbReference type="Rhea" id="RHEA-COMP:10460"/>
        <dbReference type="Rhea" id="RHEA-COMP:10461"/>
        <dbReference type="Rhea" id="RHEA-COMP:14737"/>
        <dbReference type="Rhea" id="RHEA-COMP:14739"/>
        <dbReference type="ChEBI" id="CHEBI:13193"/>
        <dbReference type="ChEBI" id="CHEBI:15378"/>
        <dbReference type="ChEBI" id="CHEBI:17319"/>
        <dbReference type="ChEBI" id="CHEBI:17499"/>
        <dbReference type="ChEBI" id="CHEBI:29917"/>
        <dbReference type="ChEBI" id="CHEBI:29961"/>
        <dbReference type="ChEBI" id="CHEBI:57844"/>
        <dbReference type="ChEBI" id="CHEBI:57856"/>
        <dbReference type="ChEBI" id="CHEBI:59789"/>
        <dbReference type="ChEBI" id="CHEBI:64428"/>
        <dbReference type="ChEBI" id="CHEBI:73599"/>
        <dbReference type="EC" id="2.8.4.4"/>
    </reaction>
</comment>
<comment type="cofactor">
    <cofactor evidence="1">
        <name>[4Fe-4S] cluster</name>
        <dbReference type="ChEBI" id="CHEBI:49883"/>
    </cofactor>
    <text evidence="1">Binds 2 [4Fe-4S] clusters. One cluster is coordinated with 3 cysteines and an exchangeable S-adenosyl-L-methionine.</text>
</comment>
<comment type="subcellular location">
    <subcellularLocation>
        <location evidence="1">Cytoplasm</location>
    </subcellularLocation>
</comment>
<comment type="similarity">
    <text evidence="1">Belongs to the methylthiotransferase family. RimO subfamily.</text>
</comment>
<keyword id="KW-0004">4Fe-4S</keyword>
<keyword id="KW-0963">Cytoplasm</keyword>
<keyword id="KW-0408">Iron</keyword>
<keyword id="KW-0411">Iron-sulfur</keyword>
<keyword id="KW-0479">Metal-binding</keyword>
<keyword id="KW-0949">S-adenosyl-L-methionine</keyword>
<keyword id="KW-0808">Transferase</keyword>
<accession>B1IXD2</accession>
<reference key="1">
    <citation type="submission" date="2008-02" db="EMBL/GenBank/DDBJ databases">
        <title>Complete sequence of Escherichia coli C str. ATCC 8739.</title>
        <authorList>
            <person name="Copeland A."/>
            <person name="Lucas S."/>
            <person name="Lapidus A."/>
            <person name="Glavina del Rio T."/>
            <person name="Dalin E."/>
            <person name="Tice H."/>
            <person name="Bruce D."/>
            <person name="Goodwin L."/>
            <person name="Pitluck S."/>
            <person name="Kiss H."/>
            <person name="Brettin T."/>
            <person name="Detter J.C."/>
            <person name="Han C."/>
            <person name="Kuske C.R."/>
            <person name="Schmutz J."/>
            <person name="Larimer F."/>
            <person name="Land M."/>
            <person name="Hauser L."/>
            <person name="Kyrpides N."/>
            <person name="Mikhailova N."/>
            <person name="Ingram L."/>
            <person name="Richardson P."/>
        </authorList>
    </citation>
    <scope>NUCLEOTIDE SEQUENCE [LARGE SCALE GENOMIC DNA]</scope>
    <source>
        <strain>ATCC 8739 / DSM 1576 / NBRC 3972 / NCIMB 8545 / WDCM 00012 / Crooks</strain>
    </source>
</reference>
<name>RIMO_ECOLC</name>